<sequence>MKRTFQPNNRKRAKVHGFRARMKTKNGRNVLARRRLKGRHSLTVSSEK</sequence>
<protein>
    <recommendedName>
        <fullName evidence="1">Large ribosomal subunit protein bL34</fullName>
    </recommendedName>
    <alternativeName>
        <fullName evidence="2">50S ribosomal protein L34</fullName>
    </alternativeName>
</protein>
<dbReference type="EMBL" id="CP000942">
    <property type="protein sequence ID" value="ACA32700.1"/>
    <property type="molecule type" value="Genomic_DNA"/>
</dbReference>
<dbReference type="RefSeq" id="WP_004026378.1">
    <property type="nucleotide sequence ID" value="NC_010503.1"/>
</dbReference>
<dbReference type="SMR" id="B1AJP5"/>
<dbReference type="GeneID" id="29672317"/>
<dbReference type="KEGG" id="upa:UPA3_0644"/>
<dbReference type="HOGENOM" id="CLU_129938_2_0_14"/>
<dbReference type="Proteomes" id="UP000002162">
    <property type="component" value="Chromosome"/>
</dbReference>
<dbReference type="GO" id="GO:1990904">
    <property type="term" value="C:ribonucleoprotein complex"/>
    <property type="evidence" value="ECO:0007669"/>
    <property type="project" value="UniProtKB-KW"/>
</dbReference>
<dbReference type="GO" id="GO:0005840">
    <property type="term" value="C:ribosome"/>
    <property type="evidence" value="ECO:0007669"/>
    <property type="project" value="UniProtKB-KW"/>
</dbReference>
<dbReference type="GO" id="GO:0003735">
    <property type="term" value="F:structural constituent of ribosome"/>
    <property type="evidence" value="ECO:0007669"/>
    <property type="project" value="InterPro"/>
</dbReference>
<dbReference type="GO" id="GO:0006412">
    <property type="term" value="P:translation"/>
    <property type="evidence" value="ECO:0007669"/>
    <property type="project" value="UniProtKB-UniRule"/>
</dbReference>
<dbReference type="FunFam" id="1.10.287.3980:FF:000001">
    <property type="entry name" value="Mitochondrial ribosomal protein L34"/>
    <property type="match status" value="1"/>
</dbReference>
<dbReference type="Gene3D" id="1.10.287.3980">
    <property type="match status" value="1"/>
</dbReference>
<dbReference type="HAMAP" id="MF_00391">
    <property type="entry name" value="Ribosomal_bL34"/>
    <property type="match status" value="1"/>
</dbReference>
<dbReference type="InterPro" id="IPR000271">
    <property type="entry name" value="Ribosomal_bL34"/>
</dbReference>
<dbReference type="InterPro" id="IPR020939">
    <property type="entry name" value="Ribosomal_bL34_CS"/>
</dbReference>
<dbReference type="NCBIfam" id="TIGR01030">
    <property type="entry name" value="rpmH_bact"/>
    <property type="match status" value="1"/>
</dbReference>
<dbReference type="PANTHER" id="PTHR14503:SF4">
    <property type="entry name" value="LARGE RIBOSOMAL SUBUNIT PROTEIN BL34M"/>
    <property type="match status" value="1"/>
</dbReference>
<dbReference type="PANTHER" id="PTHR14503">
    <property type="entry name" value="MITOCHONDRIAL RIBOSOMAL PROTEIN 34 FAMILY MEMBER"/>
    <property type="match status" value="1"/>
</dbReference>
<dbReference type="Pfam" id="PF00468">
    <property type="entry name" value="Ribosomal_L34"/>
    <property type="match status" value="1"/>
</dbReference>
<dbReference type="PROSITE" id="PS00784">
    <property type="entry name" value="RIBOSOMAL_L34"/>
    <property type="match status" value="1"/>
</dbReference>
<evidence type="ECO:0000255" key="1">
    <source>
        <dbReference type="HAMAP-Rule" id="MF_00391"/>
    </source>
</evidence>
<evidence type="ECO:0000305" key="2"/>
<comment type="similarity">
    <text evidence="1">Belongs to the bacterial ribosomal protein bL34 family.</text>
</comment>
<reference key="1">
    <citation type="submission" date="2008-02" db="EMBL/GenBank/DDBJ databases">
        <title>Genome sequence of Ureaplasma parvum serovar 3.</title>
        <authorList>
            <person name="Methe B.A."/>
            <person name="Glass J."/>
            <person name="Waites K."/>
            <person name="Shrivastava S."/>
        </authorList>
    </citation>
    <scope>NUCLEOTIDE SEQUENCE [LARGE SCALE GENOMIC DNA]</scope>
    <source>
        <strain>ATCC 27815 / 27 / NCTC 11736</strain>
    </source>
</reference>
<name>RL34_UREP2</name>
<organism>
    <name type="scientific">Ureaplasma parvum serovar 3 (strain ATCC 27815 / 27 / NCTC 11736)</name>
    <dbReference type="NCBI Taxonomy" id="505682"/>
    <lineage>
        <taxon>Bacteria</taxon>
        <taxon>Bacillati</taxon>
        <taxon>Mycoplasmatota</taxon>
        <taxon>Mycoplasmoidales</taxon>
        <taxon>Mycoplasmoidaceae</taxon>
        <taxon>Ureaplasma</taxon>
    </lineage>
</organism>
<gene>
    <name evidence="1" type="primary">rpmH</name>
    <name type="ordered locus">UPA3_0644</name>
</gene>
<accession>B1AJP5</accession>
<feature type="chain" id="PRO_1000080275" description="Large ribosomal subunit protein bL34">
    <location>
        <begin position="1"/>
        <end position="48"/>
    </location>
</feature>
<proteinExistence type="inferred from homology"/>
<keyword id="KW-0687">Ribonucleoprotein</keyword>
<keyword id="KW-0689">Ribosomal protein</keyword>